<evidence type="ECO:0000250" key="1"/>
<evidence type="ECO:0000250" key="2">
    <source>
        <dbReference type="UniProtKB" id="Q12441"/>
    </source>
</evidence>
<evidence type="ECO:0000256" key="3">
    <source>
        <dbReference type="SAM" id="MobiDB-lite"/>
    </source>
</evidence>
<evidence type="ECO:0000269" key="4">
    <source>
    </source>
</evidence>
<evidence type="ECO:0000305" key="5"/>
<sequence length="440" mass="48965">MESQQLSNYSPISHGSACASVTSKEVHTNQDPLDVSASKTEECEKASTKANSQQTTTPASSAVPENPHHASPQPASVPPPQNGPYPQQCMMTQNQANPSGWSFYGHPSMIPYTPYQMSPMYFPPGPQSQFPQYPSSVGTPLSTPSPESGNTFTDSSSADSDMTSTKKYVRPPPMLTSPNDFPNWVKTYIKFLQNSNLGGIIPTVNGKPVRQITDDELTFLYNTFQIFAPSQFLPTWVKDILSVDYTDIMKILSKSIEKMQSDTQEANDIVTLANLQYNGSTPADAFETKVTNIIDRLNNNGIHINNKVACQLIMRGLSGEYKFLRYTRHRHLNMTVAELFLDIHAIYEEQQGSRNSKPNYRRNLSDEKNDSRSYTNTTKPKVIARNPQKTNNSKSKTARAHNVSTSNNSPSTDNDSISKSTTEPIQLNNKHDLHLRPGTY</sequence>
<protein>
    <recommendedName>
        <fullName>Transposon Ty1-PR3 Gag polyprotein</fullName>
    </recommendedName>
    <alternativeName>
        <fullName>Gag-p49</fullName>
    </alternativeName>
    <alternativeName>
        <fullName>Transposon Ty1 protein A</fullName>
        <shortName>TY1A</shortName>
        <shortName>TYA</shortName>
    </alternativeName>
    <alternativeName>
        <fullName>p58</fullName>
    </alternativeName>
    <component>
        <recommendedName>
            <fullName>Capsid protein</fullName>
            <shortName>CA</shortName>
        </recommendedName>
        <alternativeName>
            <fullName>Gag-p45</fullName>
        </alternativeName>
        <alternativeName>
            <fullName>p54</fullName>
        </alternativeName>
    </component>
    <component>
        <recommendedName>
            <fullName>Gag-p4</fullName>
        </recommendedName>
    </component>
</protein>
<organism>
    <name type="scientific">Saccharomyces cerevisiae (strain ATCC 204508 / S288c)</name>
    <name type="common">Baker's yeast</name>
    <dbReference type="NCBI Taxonomy" id="559292"/>
    <lineage>
        <taxon>Eukaryota</taxon>
        <taxon>Fungi</taxon>
        <taxon>Dikarya</taxon>
        <taxon>Ascomycota</taxon>
        <taxon>Saccharomycotina</taxon>
        <taxon>Saccharomycetes</taxon>
        <taxon>Saccharomycetales</taxon>
        <taxon>Saccharomycetaceae</taxon>
        <taxon>Saccharomyces</taxon>
    </lineage>
</organism>
<keyword id="KW-0963">Cytoplasm</keyword>
<keyword id="KW-0597">Phosphoprotein</keyword>
<keyword id="KW-1185">Reference proteome</keyword>
<keyword id="KW-0688">Ribosomal frameshifting</keyword>
<keyword id="KW-0694">RNA-binding</keyword>
<keyword id="KW-0814">Transposable element</keyword>
<accession>Q6Q5H1</accession>
<accession>D6W4F8</accession>
<proteinExistence type="evidence at protein level"/>
<name>YP14A_YEAST</name>
<dbReference type="EMBL" id="U28371">
    <property type="status" value="NOT_ANNOTATED_CDS"/>
    <property type="molecule type" value="Genomic_DNA"/>
</dbReference>
<dbReference type="EMBL" id="AY558070">
    <property type="protein sequence ID" value="AAS56396.1"/>
    <property type="molecule type" value="Genomic_DNA"/>
</dbReference>
<dbReference type="EMBL" id="BK006949">
    <property type="protein sequence ID" value="DAA11574.1"/>
    <property type="molecule type" value="Genomic_DNA"/>
</dbReference>
<dbReference type="PIR" id="S69985">
    <property type="entry name" value="S69985"/>
</dbReference>
<dbReference type="RefSeq" id="NP_058196.1">
    <molecule id="Q6Q5H1-1"/>
    <property type="nucleotide sequence ID" value="NM_001184395.1"/>
</dbReference>
<dbReference type="SMR" id="Q6Q5H1"/>
<dbReference type="BioGRID" id="36329">
    <property type="interactions" value="11"/>
</dbReference>
<dbReference type="FunCoup" id="Q6Q5H1">
    <property type="interactions" value="51"/>
</dbReference>
<dbReference type="IntAct" id="Q6Q5H1">
    <property type="interactions" value="1"/>
</dbReference>
<dbReference type="GlyGen" id="Q6Q5H1">
    <property type="glycosylation" value="2 sites"/>
</dbReference>
<dbReference type="PaxDb" id="4932-YPR158C-C"/>
<dbReference type="PeptideAtlas" id="Q6Q5H1"/>
<dbReference type="GeneID" id="856285"/>
<dbReference type="KEGG" id="sce:YPR158C-C"/>
<dbReference type="AGR" id="SGD:S000007361"/>
<dbReference type="SGD" id="S000007361">
    <property type="gene designation" value="YPR158C-C"/>
</dbReference>
<dbReference type="VEuPathDB" id="FungiDB:YPR158C-C"/>
<dbReference type="eggNOG" id="KOG0017">
    <property type="taxonomic scope" value="Eukaryota"/>
</dbReference>
<dbReference type="HOGENOM" id="CLU_045291_1_0_1"/>
<dbReference type="InParanoid" id="Q6Q5H1"/>
<dbReference type="OrthoDB" id="4046078at2759"/>
<dbReference type="Proteomes" id="UP000002311">
    <property type="component" value="Chromosome XVI"/>
</dbReference>
<dbReference type="RNAct" id="Q6Q5H1">
    <property type="molecule type" value="protein"/>
</dbReference>
<dbReference type="GO" id="GO:0005737">
    <property type="term" value="C:cytoplasm"/>
    <property type="evidence" value="ECO:0007669"/>
    <property type="project" value="UniProtKB-SubCell"/>
</dbReference>
<dbReference type="GO" id="GO:0003723">
    <property type="term" value="F:RNA binding"/>
    <property type="evidence" value="ECO:0007669"/>
    <property type="project" value="UniProtKB-KW"/>
</dbReference>
<dbReference type="GO" id="GO:0075523">
    <property type="term" value="P:viral translational frameshifting"/>
    <property type="evidence" value="ECO:0007669"/>
    <property type="project" value="UniProtKB-KW"/>
</dbReference>
<dbReference type="InterPro" id="IPR015820">
    <property type="entry name" value="TYA"/>
</dbReference>
<dbReference type="Pfam" id="PF01021">
    <property type="entry name" value="TYA"/>
    <property type="match status" value="1"/>
</dbReference>
<feature type="chain" id="PRO_0000279189" description="Transposon Ty1-PR3 Gag polyprotein">
    <location>
        <begin position="1"/>
        <end position="440"/>
    </location>
</feature>
<feature type="chain" id="PRO_0000279190" description="Capsid protein" evidence="1">
    <location>
        <begin position="1"/>
        <end position="401"/>
    </location>
</feature>
<feature type="peptide" id="PRO_0000279191" description="Gag-p4" evidence="1">
    <location>
        <begin position="402"/>
        <end position="440"/>
    </location>
</feature>
<feature type="region of interest" description="Disordered" evidence="3">
    <location>
        <begin position="1"/>
        <end position="93"/>
    </location>
</feature>
<feature type="region of interest" description="Disordered" evidence="3">
    <location>
        <begin position="126"/>
        <end position="173"/>
    </location>
</feature>
<feature type="region of interest" description="RNA-binding" evidence="1">
    <location>
        <begin position="299"/>
        <end position="401"/>
    </location>
</feature>
<feature type="region of interest" description="Disordered" evidence="3">
    <location>
        <begin position="352"/>
        <end position="440"/>
    </location>
</feature>
<feature type="compositionally biased region" description="Polar residues" evidence="3">
    <location>
        <begin position="1"/>
        <end position="23"/>
    </location>
</feature>
<feature type="compositionally biased region" description="Polar residues" evidence="3">
    <location>
        <begin position="48"/>
        <end position="60"/>
    </location>
</feature>
<feature type="compositionally biased region" description="Polar residues" evidence="3">
    <location>
        <begin position="127"/>
        <end position="152"/>
    </location>
</feature>
<feature type="compositionally biased region" description="Low complexity" evidence="3">
    <location>
        <begin position="153"/>
        <end position="165"/>
    </location>
</feature>
<feature type="compositionally biased region" description="Low complexity" evidence="3">
    <location>
        <begin position="402"/>
        <end position="418"/>
    </location>
</feature>
<feature type="compositionally biased region" description="Polar residues" evidence="3">
    <location>
        <begin position="419"/>
        <end position="428"/>
    </location>
</feature>
<feature type="compositionally biased region" description="Basic and acidic residues" evidence="3">
    <location>
        <begin position="429"/>
        <end position="440"/>
    </location>
</feature>
<feature type="site" description="Cleavage; by Ty1 protease" evidence="1">
    <location>
        <begin position="401"/>
        <end position="402"/>
    </location>
</feature>
<feature type="modified residue" description="Phosphoserine" evidence="2">
    <location>
        <position position="416"/>
    </location>
</feature>
<feature type="sequence conflict" description="In Ref. 3; AAS56396." evidence="5" ref="3">
    <original>G</original>
    <variation>C</variation>
    <location>
        <position position="199"/>
    </location>
</feature>
<reference key="1">
    <citation type="journal article" date="1997" name="Nature">
        <title>The nucleotide sequence of Saccharomyces cerevisiae chromosome XVI.</title>
        <authorList>
            <person name="Bussey H."/>
            <person name="Storms R.K."/>
            <person name="Ahmed A."/>
            <person name="Albermann K."/>
            <person name="Allen E."/>
            <person name="Ansorge W."/>
            <person name="Araujo R."/>
            <person name="Aparicio A."/>
            <person name="Barrell B.G."/>
            <person name="Badcock K."/>
            <person name="Benes V."/>
            <person name="Botstein D."/>
            <person name="Bowman S."/>
            <person name="Brueckner M."/>
            <person name="Carpenter J."/>
            <person name="Cherry J.M."/>
            <person name="Chung E."/>
            <person name="Churcher C.M."/>
            <person name="Coster F."/>
            <person name="Davis K."/>
            <person name="Davis R.W."/>
            <person name="Dietrich F.S."/>
            <person name="Delius H."/>
            <person name="DiPaolo T."/>
            <person name="Dubois E."/>
            <person name="Duesterhoeft A."/>
            <person name="Duncan M."/>
            <person name="Floeth M."/>
            <person name="Fortin N."/>
            <person name="Friesen J.D."/>
            <person name="Fritz C."/>
            <person name="Goffeau A."/>
            <person name="Hall J."/>
            <person name="Hebling U."/>
            <person name="Heumann K."/>
            <person name="Hilbert H."/>
            <person name="Hillier L.W."/>
            <person name="Hunicke-Smith S."/>
            <person name="Hyman R.W."/>
            <person name="Johnston M."/>
            <person name="Kalman S."/>
            <person name="Kleine K."/>
            <person name="Komp C."/>
            <person name="Kurdi O."/>
            <person name="Lashkari D."/>
            <person name="Lew H."/>
            <person name="Lin A."/>
            <person name="Lin D."/>
            <person name="Louis E.J."/>
            <person name="Marathe R."/>
            <person name="Messenguy F."/>
            <person name="Mewes H.-W."/>
            <person name="Mirtipati S."/>
            <person name="Moestl D."/>
            <person name="Mueller-Auer S."/>
            <person name="Namath A."/>
            <person name="Nentwich U."/>
            <person name="Oefner P."/>
            <person name="Pearson D."/>
            <person name="Petel F.X."/>
            <person name="Pohl T.M."/>
            <person name="Purnelle B."/>
            <person name="Rajandream M.A."/>
            <person name="Rechmann S."/>
            <person name="Rieger M."/>
            <person name="Riles L."/>
            <person name="Roberts D."/>
            <person name="Schaefer M."/>
            <person name="Scharfe M."/>
            <person name="Scherens B."/>
            <person name="Schramm S."/>
            <person name="Schroeder M."/>
            <person name="Sdicu A.-M."/>
            <person name="Tettelin H."/>
            <person name="Urrestarazu L.A."/>
            <person name="Ushinsky S."/>
            <person name="Vierendeels F."/>
            <person name="Vissers S."/>
            <person name="Voss H."/>
            <person name="Walsh S.V."/>
            <person name="Wambutt R."/>
            <person name="Wang Y."/>
            <person name="Wedler E."/>
            <person name="Wedler H."/>
            <person name="Winnett E."/>
            <person name="Zhong W.-W."/>
            <person name="Zollner A."/>
            <person name="Vo D.H."/>
            <person name="Hani J."/>
        </authorList>
    </citation>
    <scope>NUCLEOTIDE SEQUENCE [LARGE SCALE GENOMIC DNA]</scope>
    <source>
        <strain>ATCC 204508 / S288c</strain>
    </source>
</reference>
<reference key="2">
    <citation type="journal article" date="2014" name="G3 (Bethesda)">
        <title>The reference genome sequence of Saccharomyces cerevisiae: Then and now.</title>
        <authorList>
            <person name="Engel S.R."/>
            <person name="Dietrich F.S."/>
            <person name="Fisk D.G."/>
            <person name="Binkley G."/>
            <person name="Balakrishnan R."/>
            <person name="Costanzo M.C."/>
            <person name="Dwight S.S."/>
            <person name="Hitz B.C."/>
            <person name="Karra K."/>
            <person name="Nash R.S."/>
            <person name="Weng S."/>
            <person name="Wong E.D."/>
            <person name="Lloyd P."/>
            <person name="Skrzypek M.S."/>
            <person name="Miyasato S.R."/>
            <person name="Simison M."/>
            <person name="Cherry J.M."/>
        </authorList>
    </citation>
    <scope>GENOME REANNOTATION</scope>
    <source>
        <strain>ATCC 204508 / S288c</strain>
    </source>
</reference>
<reference key="3">
    <citation type="journal article" date="2007" name="Genome Res.">
        <title>Approaching a complete repository of sequence-verified protein-encoding clones for Saccharomyces cerevisiae.</title>
        <authorList>
            <person name="Hu Y."/>
            <person name="Rolfs A."/>
            <person name="Bhullar B."/>
            <person name="Murthy T.V.S."/>
            <person name="Zhu C."/>
            <person name="Berger M.F."/>
            <person name="Camargo A.A."/>
            <person name="Kelley F."/>
            <person name="McCarron S."/>
            <person name="Jepson D."/>
            <person name="Richardson A."/>
            <person name="Raphael J."/>
            <person name="Moreira D."/>
            <person name="Taycher E."/>
            <person name="Zuo D."/>
            <person name="Mohr S."/>
            <person name="Kane M.F."/>
            <person name="Williamson J."/>
            <person name="Simpson A.J.G."/>
            <person name="Bulyk M.L."/>
            <person name="Harlow E."/>
            <person name="Marsischky G."/>
            <person name="Kolodner R.D."/>
            <person name="LaBaer J."/>
        </authorList>
    </citation>
    <scope>NUCLEOTIDE SEQUENCE [GENOMIC DNA]</scope>
    <source>
        <strain>ATCC 204508 / S288c</strain>
    </source>
</reference>
<reference key="4">
    <citation type="journal article" date="1998" name="Genome Res.">
        <title>Transposable elements and genome organization: a comprehensive survey of retrotransposons revealed by the complete Saccharomyces cerevisiae genome sequence.</title>
        <authorList>
            <person name="Kim J.M."/>
            <person name="Vanguri S."/>
            <person name="Boeke J.D."/>
            <person name="Gabriel A."/>
            <person name="Voytas D.F."/>
        </authorList>
    </citation>
    <scope>NOMENCLATURE</scope>
</reference>
<reference key="5">
    <citation type="journal article" date="2002" name="Mol. Cell. Biol.">
        <title>Differential effects of chromatin and Gcn4 on the 50-fold range of expression among individual yeast Ty1 retrotransposons.</title>
        <authorList>
            <person name="Morillon A."/>
            <person name="Benard L."/>
            <person name="Springer M."/>
            <person name="Lesage P."/>
        </authorList>
    </citation>
    <scope>INDUCTION</scope>
</reference>
<reference key="6">
    <citation type="journal article" date="2005" name="Cytogenet. Genome Res.">
        <title>Happy together: the life and times of Ty retrotransposons and their hosts.</title>
        <authorList>
            <person name="Lesage P."/>
            <person name="Todeschini A.L."/>
        </authorList>
    </citation>
    <scope>REVIEW</scope>
</reference>
<reference key="7">
    <citation type="journal article" date="2008" name="Mol. Cell. Proteomics">
        <title>A multidimensional chromatography technology for in-depth phosphoproteome analysis.</title>
        <authorList>
            <person name="Albuquerque C.P."/>
            <person name="Smolka M.B."/>
            <person name="Payne S.H."/>
            <person name="Bafna V."/>
            <person name="Eng J."/>
            <person name="Zhou H."/>
        </authorList>
    </citation>
    <scope>IDENTIFICATION BY MASS SPECTROMETRY [LARGE SCALE ANALYSIS]</scope>
</reference>
<comment type="function">
    <text evidence="1">Capsid protein (CA) is the structural component of the virus-like particle (VLP), forming the shell that encapsulates the retrotransposons dimeric RNA genome. The particles are assembled from trimer-clustered units and there are holes in the capsid shells that allow for the diffusion of macromolecules. CA also has nucleocapsid-like chaperone activity, promoting primer tRNA(i)-Met annealing to the multipartite primer-binding site (PBS), dimerization of Ty1 RNA and initiation of reverse transcription (By similarity).</text>
</comment>
<comment type="subunit">
    <text evidence="1">Homotrimer.</text>
</comment>
<comment type="subcellular location">
    <subcellularLocation>
        <location evidence="1">Cytoplasm</location>
    </subcellularLocation>
</comment>
<comment type="alternative products">
    <event type="ribosomal frameshifting"/>
    <isoform>
        <id>Q6Q5H1-1</id>
        <name>Transposon Ty1-PR3 Gag polyprotein</name>
        <sequence type="displayed"/>
    </isoform>
    <isoform>
        <id>P0C2J1-1</id>
        <name>Transposon Ty1-PR3 Gag-Pol polyprotein</name>
        <sequence type="external"/>
    </isoform>
    <text evidence="1">The Gag-Pol polyprotein is generated by a +1 ribosomal frameshift. The ratio of Gag:Gag-Pol varies between 20:1 and 5:1 (By similarity).</text>
</comment>
<comment type="induction">
    <text evidence="4">Ty1-PR3 is a weakly expressed element. Induced under amino acid starvation conditions by GCN4.</text>
</comment>
<comment type="domain">
    <text evidence="1">The C-terminal RNA-binding region of CA is sufficient for all its nucleocapsid-like chaperone activities.</text>
</comment>
<comment type="miscellaneous">
    <text>Retrotransposons are mobile genetic entities that are able to replicate via an RNA intermediate and a reverse transcription step. In contrast to retroviruses, retrotransposons are non-infectious, lack an envelope and remain intracellular. Ty1 retrotransposons belong to the copia elements (pseudoviridae).</text>
</comment>
<comment type="miscellaneous">
    <molecule>Isoform Transposon Ty1-PR3 Gag polyprotein</molecule>
    <text>Produced by conventional translation.</text>
</comment>
<gene>
    <name type="primary">TY1A-PR3</name>
    <name type="synonym">YPRCTy1-4 GAG</name>
    <name type="ordered locus">YPR158C-C</name>
    <name type="ORF">P9584.3</name>
</gene>